<proteinExistence type="inferred from homology"/>
<comment type="function">
    <text evidence="1">Binds 16S rRNA, required for the assembly of 30S particles and may also be responsible for determining the conformation of the 16S rRNA at the A site.</text>
</comment>
<comment type="subunit">
    <text evidence="1">Part of the 30S ribosomal subunit. Contacts proteins S3 and S10.</text>
</comment>
<comment type="similarity">
    <text evidence="1">Belongs to the universal ribosomal protein uS14 family.</text>
</comment>
<comment type="sequence caution" evidence="2">
    <conflict type="erroneous initiation">
        <sequence resource="EMBL-CDS" id="ACC58577"/>
    </conflict>
</comment>
<reference key="1">
    <citation type="journal article" date="2008" name="Antimicrob. Agents Chemother.">
        <title>Whole-genome pyrosequencing of an epidemic multidrug-resistant Acinetobacter baumannii strain belonging to the European clone II group.</title>
        <authorList>
            <person name="Iacono M."/>
            <person name="Villa L."/>
            <person name="Fortini D."/>
            <person name="Bordoni R."/>
            <person name="Imperi F."/>
            <person name="Bonnal R.J."/>
            <person name="Sicheritz-Ponten T."/>
            <person name="De Bellis G."/>
            <person name="Visca P."/>
            <person name="Cassone A."/>
            <person name="Carattoli A."/>
        </authorList>
    </citation>
    <scope>NUCLEOTIDE SEQUENCE [LARGE SCALE GENOMIC DNA]</scope>
    <source>
        <strain>ACICU</strain>
    </source>
</reference>
<organism>
    <name type="scientific">Acinetobacter baumannii (strain ACICU)</name>
    <dbReference type="NCBI Taxonomy" id="405416"/>
    <lineage>
        <taxon>Bacteria</taxon>
        <taxon>Pseudomonadati</taxon>
        <taxon>Pseudomonadota</taxon>
        <taxon>Gammaproteobacteria</taxon>
        <taxon>Moraxellales</taxon>
        <taxon>Moraxellaceae</taxon>
        <taxon>Acinetobacter</taxon>
        <taxon>Acinetobacter calcoaceticus/baumannii complex</taxon>
    </lineage>
</organism>
<dbReference type="EMBL" id="CP000863">
    <property type="protein sequence ID" value="ACC58577.1"/>
    <property type="status" value="ALT_INIT"/>
    <property type="molecule type" value="Genomic_DNA"/>
</dbReference>
<dbReference type="RefSeq" id="WP_001074624.1">
    <property type="nucleotide sequence ID" value="NZ_CP031380.1"/>
</dbReference>
<dbReference type="SMR" id="B2HZ95"/>
<dbReference type="GeneID" id="92895304"/>
<dbReference type="KEGG" id="abc:ACICU_03265"/>
<dbReference type="HOGENOM" id="CLU_139869_0_1_6"/>
<dbReference type="Proteomes" id="UP000008839">
    <property type="component" value="Chromosome"/>
</dbReference>
<dbReference type="GO" id="GO:0005737">
    <property type="term" value="C:cytoplasm"/>
    <property type="evidence" value="ECO:0007669"/>
    <property type="project" value="UniProtKB-ARBA"/>
</dbReference>
<dbReference type="GO" id="GO:0015935">
    <property type="term" value="C:small ribosomal subunit"/>
    <property type="evidence" value="ECO:0007669"/>
    <property type="project" value="TreeGrafter"/>
</dbReference>
<dbReference type="GO" id="GO:0019843">
    <property type="term" value="F:rRNA binding"/>
    <property type="evidence" value="ECO:0007669"/>
    <property type="project" value="UniProtKB-UniRule"/>
</dbReference>
<dbReference type="GO" id="GO:0003735">
    <property type="term" value="F:structural constituent of ribosome"/>
    <property type="evidence" value="ECO:0007669"/>
    <property type="project" value="InterPro"/>
</dbReference>
<dbReference type="GO" id="GO:0006412">
    <property type="term" value="P:translation"/>
    <property type="evidence" value="ECO:0007669"/>
    <property type="project" value="UniProtKB-UniRule"/>
</dbReference>
<dbReference type="FunFam" id="1.10.287.1480:FF:000001">
    <property type="entry name" value="30S ribosomal protein S14"/>
    <property type="match status" value="1"/>
</dbReference>
<dbReference type="Gene3D" id="1.10.287.1480">
    <property type="match status" value="1"/>
</dbReference>
<dbReference type="HAMAP" id="MF_00537">
    <property type="entry name" value="Ribosomal_uS14_1"/>
    <property type="match status" value="1"/>
</dbReference>
<dbReference type="InterPro" id="IPR001209">
    <property type="entry name" value="Ribosomal_uS14"/>
</dbReference>
<dbReference type="InterPro" id="IPR023036">
    <property type="entry name" value="Ribosomal_uS14_bac/plastid"/>
</dbReference>
<dbReference type="InterPro" id="IPR018271">
    <property type="entry name" value="Ribosomal_uS14_CS"/>
</dbReference>
<dbReference type="NCBIfam" id="NF006477">
    <property type="entry name" value="PRK08881.1"/>
    <property type="match status" value="1"/>
</dbReference>
<dbReference type="PANTHER" id="PTHR19836">
    <property type="entry name" value="30S RIBOSOMAL PROTEIN S14"/>
    <property type="match status" value="1"/>
</dbReference>
<dbReference type="PANTHER" id="PTHR19836:SF19">
    <property type="entry name" value="SMALL RIBOSOMAL SUBUNIT PROTEIN US14M"/>
    <property type="match status" value="1"/>
</dbReference>
<dbReference type="Pfam" id="PF00253">
    <property type="entry name" value="Ribosomal_S14"/>
    <property type="match status" value="1"/>
</dbReference>
<dbReference type="SUPFAM" id="SSF57716">
    <property type="entry name" value="Glucocorticoid receptor-like (DNA-binding domain)"/>
    <property type="match status" value="1"/>
</dbReference>
<dbReference type="PROSITE" id="PS00527">
    <property type="entry name" value="RIBOSOMAL_S14"/>
    <property type="match status" value="1"/>
</dbReference>
<protein>
    <recommendedName>
        <fullName evidence="1">Small ribosomal subunit protein uS14</fullName>
    </recommendedName>
    <alternativeName>
        <fullName evidence="2">30S ribosomal protein S14</fullName>
    </alternativeName>
</protein>
<keyword id="KW-0687">Ribonucleoprotein</keyword>
<keyword id="KW-0689">Ribosomal protein</keyword>
<keyword id="KW-0694">RNA-binding</keyword>
<keyword id="KW-0699">rRNA-binding</keyword>
<accession>B2HZ95</accession>
<gene>
    <name evidence="1" type="primary">rpsN</name>
    <name type="ordered locus">ACICU_03265</name>
</gene>
<feature type="chain" id="PRO_0000354377" description="Small ribosomal subunit protein uS14">
    <location>
        <begin position="1"/>
        <end position="101"/>
    </location>
</feature>
<evidence type="ECO:0000255" key="1">
    <source>
        <dbReference type="HAMAP-Rule" id="MF_00537"/>
    </source>
</evidence>
<evidence type="ECO:0000305" key="2"/>
<name>RS14_ACIBC</name>
<sequence>MAKKGMINRELKREKTVAKYAAKRAELKATIANVNASDEERFEAMLKLQALPRNASPVRLRNRCGLTGRPHGYFRKFGLSRNKLRDTVMQGDVPGVVKASW</sequence>